<evidence type="ECO:0000255" key="1">
    <source>
        <dbReference type="HAMAP-Rule" id="MF_00127"/>
    </source>
</evidence>
<comment type="catalytic activity">
    <reaction evidence="1">
        <text>tRNA(His) + L-histidine + ATP = L-histidyl-tRNA(His) + AMP + diphosphate + H(+)</text>
        <dbReference type="Rhea" id="RHEA:17313"/>
        <dbReference type="Rhea" id="RHEA-COMP:9665"/>
        <dbReference type="Rhea" id="RHEA-COMP:9689"/>
        <dbReference type="ChEBI" id="CHEBI:15378"/>
        <dbReference type="ChEBI" id="CHEBI:30616"/>
        <dbReference type="ChEBI" id="CHEBI:33019"/>
        <dbReference type="ChEBI" id="CHEBI:57595"/>
        <dbReference type="ChEBI" id="CHEBI:78442"/>
        <dbReference type="ChEBI" id="CHEBI:78527"/>
        <dbReference type="ChEBI" id="CHEBI:456215"/>
        <dbReference type="EC" id="6.1.1.21"/>
    </reaction>
</comment>
<comment type="subcellular location">
    <subcellularLocation>
        <location evidence="1">Cytoplasm</location>
    </subcellularLocation>
</comment>
<comment type="similarity">
    <text evidence="1">Belongs to the class-II aminoacyl-tRNA synthetase family.</text>
</comment>
<accession>B1YCS2</accession>
<feature type="chain" id="PRO_1000095604" description="Histidine--tRNA ligase">
    <location>
        <begin position="1"/>
        <end position="417"/>
    </location>
</feature>
<organism>
    <name type="scientific">Pyrobaculum neutrophilum (strain DSM 2338 / JCM 9278 / NBRC 100436 / V24Sta)</name>
    <name type="common">Thermoproteus neutrophilus</name>
    <dbReference type="NCBI Taxonomy" id="444157"/>
    <lineage>
        <taxon>Archaea</taxon>
        <taxon>Thermoproteota</taxon>
        <taxon>Thermoprotei</taxon>
        <taxon>Thermoproteales</taxon>
        <taxon>Thermoproteaceae</taxon>
        <taxon>Pyrobaculum</taxon>
    </lineage>
</organism>
<keyword id="KW-0030">Aminoacyl-tRNA synthetase</keyword>
<keyword id="KW-0067">ATP-binding</keyword>
<keyword id="KW-0963">Cytoplasm</keyword>
<keyword id="KW-0436">Ligase</keyword>
<keyword id="KW-0547">Nucleotide-binding</keyword>
<keyword id="KW-0648">Protein biosynthesis</keyword>
<sequence length="417" mass="47754">MSGLPEHLRRPPRGMRDWLPPQLYALIEMEERLSKVAESFGYRRVETPVVEHFEVLAKKAGQEVVNEIYYFKDKAGRDVGLRFDMTVPVARVISYNLDLPRPVRWYYFTKVFRYDEPQHGRYREFHQFGIELVGSASPRADAEVIQVFIEALEAAGARDYVVKINDRRAVDKLLESLGVLQHRDVIYRALDKKYKLPREQVVDIMTNGGVPIDKAERIYDASEEMTLEEAVDAVLRLDAGLGSFYQKLVGYLATAVPVDRLRFDMSIVRGLDYYTGVVFEAYVGKYRLAVGGGGRYDDLLELYSGVKMPALGFAIGVERLMEAVGLERVEKPLDYYIYIFDDGAYPHAVALAKKLRAAGHSVAIELGEKNLKDAFEYILKVGTKYLIIMGRRELERGVVKIRDLQRREEFEKPLAEF</sequence>
<proteinExistence type="inferred from homology"/>
<protein>
    <recommendedName>
        <fullName evidence="1">Histidine--tRNA ligase</fullName>
        <ecNumber evidence="1">6.1.1.21</ecNumber>
    </recommendedName>
    <alternativeName>
        <fullName evidence="1">Histidyl-tRNA synthetase</fullName>
        <shortName evidence="1">HisRS</shortName>
    </alternativeName>
</protein>
<name>SYH_PYRNV</name>
<dbReference type="EC" id="6.1.1.21" evidence="1"/>
<dbReference type="EMBL" id="CP001014">
    <property type="protein sequence ID" value="ACB39585.1"/>
    <property type="molecule type" value="Genomic_DNA"/>
</dbReference>
<dbReference type="RefSeq" id="WP_012350005.1">
    <property type="nucleotide sequence ID" value="NC_010525.1"/>
</dbReference>
<dbReference type="SMR" id="B1YCS2"/>
<dbReference type="STRING" id="444157.Tneu_0646"/>
<dbReference type="GeneID" id="6165259"/>
<dbReference type="KEGG" id="tne:Tneu_0646"/>
<dbReference type="eggNOG" id="arCOG00404">
    <property type="taxonomic scope" value="Archaea"/>
</dbReference>
<dbReference type="HOGENOM" id="CLU_025113_3_0_2"/>
<dbReference type="OrthoDB" id="8659at2157"/>
<dbReference type="Proteomes" id="UP000001694">
    <property type="component" value="Chromosome"/>
</dbReference>
<dbReference type="GO" id="GO:0005737">
    <property type="term" value="C:cytoplasm"/>
    <property type="evidence" value="ECO:0007669"/>
    <property type="project" value="UniProtKB-SubCell"/>
</dbReference>
<dbReference type="GO" id="GO:0005524">
    <property type="term" value="F:ATP binding"/>
    <property type="evidence" value="ECO:0007669"/>
    <property type="project" value="UniProtKB-UniRule"/>
</dbReference>
<dbReference type="GO" id="GO:0004821">
    <property type="term" value="F:histidine-tRNA ligase activity"/>
    <property type="evidence" value="ECO:0007669"/>
    <property type="project" value="UniProtKB-UniRule"/>
</dbReference>
<dbReference type="GO" id="GO:0006427">
    <property type="term" value="P:histidyl-tRNA aminoacylation"/>
    <property type="evidence" value="ECO:0007669"/>
    <property type="project" value="UniProtKB-UniRule"/>
</dbReference>
<dbReference type="GO" id="GO:0000105">
    <property type="term" value="P:L-histidine biosynthetic process"/>
    <property type="evidence" value="ECO:0007669"/>
    <property type="project" value="InterPro"/>
</dbReference>
<dbReference type="CDD" id="cd00773">
    <property type="entry name" value="HisRS-like_core"/>
    <property type="match status" value="1"/>
</dbReference>
<dbReference type="Gene3D" id="3.40.50.800">
    <property type="entry name" value="Anticodon-binding domain"/>
    <property type="match status" value="1"/>
</dbReference>
<dbReference type="Gene3D" id="3.30.930.10">
    <property type="entry name" value="Bira Bifunctional Protein, Domain 2"/>
    <property type="match status" value="1"/>
</dbReference>
<dbReference type="HAMAP" id="MF_00127">
    <property type="entry name" value="His_tRNA_synth"/>
    <property type="match status" value="1"/>
</dbReference>
<dbReference type="HAMAP" id="MF_00125">
    <property type="entry name" value="HisZ"/>
    <property type="match status" value="1"/>
</dbReference>
<dbReference type="InterPro" id="IPR006195">
    <property type="entry name" value="aa-tRNA-synth_II"/>
</dbReference>
<dbReference type="InterPro" id="IPR045864">
    <property type="entry name" value="aa-tRNA-synth_II/BPL/LPL"/>
</dbReference>
<dbReference type="InterPro" id="IPR004154">
    <property type="entry name" value="Anticodon-bd"/>
</dbReference>
<dbReference type="InterPro" id="IPR036621">
    <property type="entry name" value="Anticodon-bd_dom_sf"/>
</dbReference>
<dbReference type="InterPro" id="IPR015807">
    <property type="entry name" value="His-tRNA-ligase"/>
</dbReference>
<dbReference type="InterPro" id="IPR041715">
    <property type="entry name" value="HisRS-like_core"/>
</dbReference>
<dbReference type="InterPro" id="IPR004516">
    <property type="entry name" value="HisRS/HisZ"/>
</dbReference>
<dbReference type="InterPro" id="IPR004517">
    <property type="entry name" value="HisZ"/>
</dbReference>
<dbReference type="NCBIfam" id="TIGR00442">
    <property type="entry name" value="hisS"/>
    <property type="match status" value="1"/>
</dbReference>
<dbReference type="PANTHER" id="PTHR43707:SF1">
    <property type="entry name" value="HISTIDINE--TRNA LIGASE, MITOCHONDRIAL-RELATED"/>
    <property type="match status" value="1"/>
</dbReference>
<dbReference type="PANTHER" id="PTHR43707">
    <property type="entry name" value="HISTIDYL-TRNA SYNTHETASE"/>
    <property type="match status" value="1"/>
</dbReference>
<dbReference type="Pfam" id="PF03129">
    <property type="entry name" value="HGTP_anticodon"/>
    <property type="match status" value="1"/>
</dbReference>
<dbReference type="Pfam" id="PF13393">
    <property type="entry name" value="tRNA-synt_His"/>
    <property type="match status" value="1"/>
</dbReference>
<dbReference type="PIRSF" id="PIRSF001549">
    <property type="entry name" value="His-tRNA_synth"/>
    <property type="match status" value="1"/>
</dbReference>
<dbReference type="SUPFAM" id="SSF52954">
    <property type="entry name" value="Class II aaRS ABD-related"/>
    <property type="match status" value="1"/>
</dbReference>
<dbReference type="SUPFAM" id="SSF55681">
    <property type="entry name" value="Class II aaRS and biotin synthetases"/>
    <property type="match status" value="1"/>
</dbReference>
<dbReference type="PROSITE" id="PS50862">
    <property type="entry name" value="AA_TRNA_LIGASE_II"/>
    <property type="match status" value="1"/>
</dbReference>
<reference key="1">
    <citation type="submission" date="2008-03" db="EMBL/GenBank/DDBJ databases">
        <title>Complete sequence of Thermoproteus neutrophilus V24Sta.</title>
        <authorList>
            <consortium name="US DOE Joint Genome Institute"/>
            <person name="Copeland A."/>
            <person name="Lucas S."/>
            <person name="Lapidus A."/>
            <person name="Glavina del Rio T."/>
            <person name="Dalin E."/>
            <person name="Tice H."/>
            <person name="Bruce D."/>
            <person name="Goodwin L."/>
            <person name="Pitluck S."/>
            <person name="Sims D."/>
            <person name="Brettin T."/>
            <person name="Detter J.C."/>
            <person name="Han C."/>
            <person name="Kuske C.R."/>
            <person name="Schmutz J."/>
            <person name="Larimer F."/>
            <person name="Land M."/>
            <person name="Hauser L."/>
            <person name="Kyrpides N."/>
            <person name="Mikhailova N."/>
            <person name="Biddle J.F."/>
            <person name="Zhang Z."/>
            <person name="Fitz-Gibbon S.T."/>
            <person name="Lowe T.M."/>
            <person name="Saltikov C."/>
            <person name="House C.H."/>
            <person name="Richardson P."/>
        </authorList>
    </citation>
    <scope>NUCLEOTIDE SEQUENCE [LARGE SCALE GENOMIC DNA]</scope>
    <source>
        <strain>DSM 2338 / JCM 9278 / NBRC 100436 / V24Sta</strain>
    </source>
</reference>
<gene>
    <name evidence="1" type="primary">hisS</name>
    <name type="ordered locus">Tneu_0646</name>
</gene>